<keyword id="KW-0014">AIDS</keyword>
<keyword id="KW-1035">Host cytoplasm</keyword>
<keyword id="KW-1048">Host nucleus</keyword>
<keyword id="KW-0945">Host-virus interaction</keyword>
<keyword id="KW-0488">Methylation</keyword>
<keyword id="KW-0509">mRNA transport</keyword>
<keyword id="KW-0597">Phosphoprotein</keyword>
<keyword id="KW-0694">RNA-binding</keyword>
<keyword id="KW-0813">Transport</keyword>
<comment type="function">
    <text evidence="1">Escorts unspliced or incompletely spliced viral pre-mRNAs (late transcripts) out of the nucleus of infected cells. These pre-mRNAs carry a recognition sequence called Rev responsive element (RRE) located in the env gene, that is not present in fully spliced viral mRNAs (early transcripts). This function is essential since most viral proteins are translated from unspliced or partially spliced pre-mRNAs which cannot exit the nucleus by the pathway used by fully processed cellular mRNAs. Rev itself is translated from a fully spliced mRNA that readily exits the nucleus. Rev's nuclear localization signal (NLS) binds directly to KPNB1/Importin beta-1 without previous binding to KPNA1/Importin alpha-1. KPNB1 binds to the GDP bound form of RAN (Ran-GDP) and targets Rev to the nucleus. In the nucleus, the conversion from Ran-GDP to Ran-GTP dissociates Rev from KPNB1 and allows Rev's binding to the RRE in viral pre-mRNAs. Rev multimerization on the RRE via cooperative assembly exposes its nuclear export signal (NES) to the surface. Rev can then form a complex with XPO1/CRM1 and Ran-GTP, leading to nuclear export of the complex. Conversion from Ran-GTP to Ran-GDP mediates dissociation of the Rev/RRE/XPO1/RAN complex, so that Rev can return to the nucleus for a subsequent round of export. Beside KPNB1, also seems to interact with TNPO1/Transportin-1, RANBP5/IPO5 and IPO7/RANBP7 for nuclear import. The nucleoporin-like HRB/RIP is an essential cofactor that probably indirectly interacts with Rev to release HIV RNAs from the perinuclear region to the cytoplasm.</text>
</comment>
<comment type="subunit">
    <text evidence="1">Homomultimer; when bound to the RRE. Multimeric assembly is essential for activity and may involve XPO1. Binds to human KPNB1, XPO1, TNPO1, RANBP5 and IPO7. Interacts with the viral Integrase. Interacts with human KHDRBS1. Interacts with human NAP1; this interaction decreases Rev multimerization and stimulates its activity. Interacts with human DEAD-box helicases DDX3 and DDX24; these interactions may serve for viral RNA export to the cytoplasm and packaging, respectively. Interacts with human PSIP1; this interaction may inhibit HIV-1 DNA integration by promoting dissociation of the Integrase-LEDGF/p75 complex.</text>
</comment>
<comment type="subcellular location">
    <subcellularLocation>
        <location evidence="1">Host nucleus</location>
        <location evidence="1">Host nucleolus</location>
    </subcellularLocation>
    <subcellularLocation>
        <location evidence="1">Host cytoplasm</location>
    </subcellularLocation>
    <text evidence="1">The presence of both nuclear import and nuclear export signals leads to continuous shuttling between the nucleus and cytoplasm.</text>
</comment>
<comment type="domain">
    <text evidence="1">The RNA-binding motif binds to the RRE, a 240 bp stem-and-loop structure present in incompletely spliced viral pre-mRNAs. This region also contains the NLS which mediates nuclear localization via KPNB1 binding and, when the N-terminal sequence is present, nucleolar targeting. These overlapping functions prevent Rev bound to RRE from undesirable return to the nucleus. When Rev binds the RRE, the NLS becomes masked while the NES remains accessible. The leucine-rich NES mediates binding to human XPO1.</text>
</comment>
<comment type="PTM">
    <text evidence="1">Asymmetrically arginine dimethylated at one site by host PRMT6. Methylation impairs the RNA-binding activity and export of viral RNA from the nucleus to the cytoplasm.</text>
</comment>
<comment type="PTM">
    <text evidence="1">Phosphorylated by protein kinase CK2. Presence of, and maybe binding to the N-terminus of the regulatory beta subunit of CK2 is necessary for CK2-mediated Rev's phosphorylation.</text>
</comment>
<comment type="miscellaneous">
    <text evidence="1">HIV-1 lineages are divided in three main groups, M (for Major), O (for Outlier), and N (for New, or Non-M, Non-O). The vast majority of strains found worldwide belong to the group M. Group O seems to be endemic to and largely confined to Cameroon and neighboring countries in West Central Africa, where these viruses represent a small minority of HIV-1 strains. The group N is represented by a limited number of isolates from Cameroonian persons. The group M is further subdivided in 9 clades or subtypes (A to D, F to H, J and K).</text>
</comment>
<comment type="similarity">
    <text evidence="1">Belongs to the HIV-1 REV protein family.</text>
</comment>
<name>REV_HV1SE</name>
<protein>
    <recommendedName>
        <fullName evidence="1">Protein Rev</fullName>
    </recommendedName>
    <alternativeName>
        <fullName evidence="1">ART/TRS</fullName>
    </alternativeName>
    <alternativeName>
        <fullName evidence="1">Anti-repression transactivator</fullName>
    </alternativeName>
    <alternativeName>
        <fullName evidence="1">Regulator of expression of viral proteins</fullName>
    </alternativeName>
</protein>
<feature type="chain" id="PRO_0000245003" description="Protein Rev">
    <location>
        <begin position="1"/>
        <end position="107"/>
    </location>
</feature>
<feature type="region of interest" description="Homomultimerization" evidence="1">
    <location>
        <begin position="18"/>
        <end position="26"/>
    </location>
</feature>
<feature type="region of interest" description="Disordered" evidence="2">
    <location>
        <begin position="24"/>
        <end position="48"/>
    </location>
</feature>
<feature type="region of interest" description="Disordered" evidence="2">
    <location>
        <begin position="82"/>
        <end position="107"/>
    </location>
</feature>
<feature type="short sequence motif" description="Nuclear localization signal and RNA-binding (RRE)" evidence="1">
    <location>
        <begin position="34"/>
        <end position="50"/>
    </location>
</feature>
<feature type="short sequence motif" description="Nuclear export signal and binding to XPO1" evidence="1">
    <location>
        <begin position="73"/>
        <end position="84"/>
    </location>
</feature>
<feature type="compositionally biased region" description="Basic residues" evidence="2">
    <location>
        <begin position="36"/>
        <end position="48"/>
    </location>
</feature>
<feature type="compositionally biased region" description="Polar residues" evidence="2">
    <location>
        <begin position="88"/>
        <end position="101"/>
    </location>
</feature>
<feature type="modified residue" description="Phosphoserine; by host CK2" evidence="1">
    <location>
        <position position="5"/>
    </location>
</feature>
<feature type="modified residue" description="Phosphoserine; by host" evidence="1">
    <location>
        <position position="92"/>
    </location>
</feature>
<organism>
    <name type="scientific">Human immunodeficiency virus type 1 group M subtype G (isolate SE6165)</name>
    <name type="common">HIV-1</name>
    <dbReference type="NCBI Taxonomy" id="388824"/>
    <lineage>
        <taxon>Viruses</taxon>
        <taxon>Riboviria</taxon>
        <taxon>Pararnavirae</taxon>
        <taxon>Artverviricota</taxon>
        <taxon>Revtraviricetes</taxon>
        <taxon>Ortervirales</taxon>
        <taxon>Retroviridae</taxon>
        <taxon>Orthoretrovirinae</taxon>
        <taxon>Lentivirus</taxon>
        <taxon>Human immunodeficiency virus type 1</taxon>
    </lineage>
</organism>
<organismHost>
    <name type="scientific">Homo sapiens</name>
    <name type="common">Human</name>
    <dbReference type="NCBI Taxonomy" id="9606"/>
</organismHost>
<reference key="1">
    <citation type="journal article" date="1998" name="Virology">
        <title>Full genome sequences of human immunodeficiency virus type 1 subtypes G and A/G intersubtype recombinants.</title>
        <authorList>
            <person name="Carr J.K."/>
            <person name="Salminen M.O."/>
            <person name="Albert J."/>
            <person name="Sanders-Buell E."/>
            <person name="Gotte D."/>
            <person name="Birx D.L."/>
            <person name="McCutchan F.E."/>
        </authorList>
    </citation>
    <scope>NUCLEOTIDE SEQUENCE [GENOMIC DNA]</scope>
</reference>
<reference key="2">
    <citation type="journal article" date="1999" name="Arch. Biochem. Biophys.">
        <title>The ins and outs of HIV Rev.</title>
        <authorList>
            <person name="Hope T.J."/>
        </authorList>
    </citation>
    <scope>REVIEW</scope>
</reference>
<dbReference type="EMBL" id="AF061642">
    <property type="status" value="NOT_ANNOTATED_CDS"/>
    <property type="molecule type" value="Genomic_DNA"/>
</dbReference>
<dbReference type="SMR" id="P0C1L7"/>
<dbReference type="Proteomes" id="UP000135013">
    <property type="component" value="Segment"/>
</dbReference>
<dbReference type="GO" id="GO:0030430">
    <property type="term" value="C:host cell cytoplasm"/>
    <property type="evidence" value="ECO:0007669"/>
    <property type="project" value="UniProtKB-SubCell"/>
</dbReference>
<dbReference type="GO" id="GO:0044196">
    <property type="term" value="C:host cell nucleolus"/>
    <property type="evidence" value="ECO:0007669"/>
    <property type="project" value="UniProtKB-SubCell"/>
</dbReference>
<dbReference type="GO" id="GO:0003700">
    <property type="term" value="F:DNA-binding transcription factor activity"/>
    <property type="evidence" value="ECO:0007669"/>
    <property type="project" value="UniProtKB-UniRule"/>
</dbReference>
<dbReference type="GO" id="GO:0003723">
    <property type="term" value="F:RNA binding"/>
    <property type="evidence" value="ECO:0007669"/>
    <property type="project" value="UniProtKB-UniRule"/>
</dbReference>
<dbReference type="GO" id="GO:0051028">
    <property type="term" value="P:mRNA transport"/>
    <property type="evidence" value="ECO:0007669"/>
    <property type="project" value="UniProtKB-UniRule"/>
</dbReference>
<dbReference type="GO" id="GO:0016032">
    <property type="term" value="P:viral process"/>
    <property type="evidence" value="ECO:0007669"/>
    <property type="project" value="UniProtKB-UniRule"/>
</dbReference>
<dbReference type="Gene3D" id="6.10.140.630">
    <property type="match status" value="1"/>
</dbReference>
<dbReference type="HAMAP" id="MF_04077">
    <property type="entry name" value="REV_HIV1"/>
    <property type="match status" value="1"/>
</dbReference>
<dbReference type="InterPro" id="IPR000625">
    <property type="entry name" value="REV_protein"/>
</dbReference>
<dbReference type="Pfam" id="PF00424">
    <property type="entry name" value="REV"/>
    <property type="match status" value="1"/>
</dbReference>
<evidence type="ECO:0000255" key="1">
    <source>
        <dbReference type="HAMAP-Rule" id="MF_04077"/>
    </source>
</evidence>
<evidence type="ECO:0000256" key="2">
    <source>
        <dbReference type="SAM" id="MobiDB-lite"/>
    </source>
</evidence>
<accession>P0C1L7</accession>
<gene>
    <name evidence="1" type="primary">rev</name>
</gene>
<proteinExistence type="inferred from homology"/>
<sequence length="107" mass="11992">MAGRSGSTDEELLRAVKAIKILYQSNPYPPPEGTRQARRNRRRRWRARQRQISAISERILTAYLGRPAEPVPLQLPPLERLHLDCSEDSGTSGTQQPQGTETGVGRS</sequence>